<keyword id="KW-1003">Cell membrane</keyword>
<keyword id="KW-0406">Ion transport</keyword>
<keyword id="KW-0472">Membrane</keyword>
<keyword id="KW-0630">Potassium</keyword>
<keyword id="KW-0633">Potassium transport</keyword>
<keyword id="KW-0769">Symport</keyword>
<keyword id="KW-0812">Transmembrane</keyword>
<keyword id="KW-1133">Transmembrane helix</keyword>
<keyword id="KW-0813">Transport</keyword>
<evidence type="ECO:0000255" key="1">
    <source>
        <dbReference type="HAMAP-Rule" id="MF_01522"/>
    </source>
</evidence>
<organism>
    <name type="scientific">Lactococcus lactis subsp. cremoris (strain MG1363)</name>
    <dbReference type="NCBI Taxonomy" id="416870"/>
    <lineage>
        <taxon>Bacteria</taxon>
        <taxon>Bacillati</taxon>
        <taxon>Bacillota</taxon>
        <taxon>Bacilli</taxon>
        <taxon>Lactobacillales</taxon>
        <taxon>Streptococcaceae</taxon>
        <taxon>Lactococcus</taxon>
        <taxon>Lactococcus cremoris subsp. cremoris</taxon>
    </lineage>
</organism>
<dbReference type="EMBL" id="AM406671">
    <property type="protein sequence ID" value="CAL97188.1"/>
    <property type="molecule type" value="Genomic_DNA"/>
</dbReference>
<dbReference type="RefSeq" id="WP_011834607.1">
    <property type="nucleotide sequence ID" value="NC_009004.1"/>
</dbReference>
<dbReference type="STRING" id="416870.llmg_0588"/>
<dbReference type="GeneID" id="61108899"/>
<dbReference type="KEGG" id="llm:llmg_0588"/>
<dbReference type="eggNOG" id="COG3158">
    <property type="taxonomic scope" value="Bacteria"/>
</dbReference>
<dbReference type="HOGENOM" id="CLU_008142_4_1_9"/>
<dbReference type="OrthoDB" id="9805577at2"/>
<dbReference type="PhylomeDB" id="A2RIU1"/>
<dbReference type="Proteomes" id="UP000000364">
    <property type="component" value="Chromosome"/>
</dbReference>
<dbReference type="GO" id="GO:0005886">
    <property type="term" value="C:plasma membrane"/>
    <property type="evidence" value="ECO:0007669"/>
    <property type="project" value="UniProtKB-SubCell"/>
</dbReference>
<dbReference type="GO" id="GO:0015079">
    <property type="term" value="F:potassium ion transmembrane transporter activity"/>
    <property type="evidence" value="ECO:0007669"/>
    <property type="project" value="UniProtKB-UniRule"/>
</dbReference>
<dbReference type="GO" id="GO:0015293">
    <property type="term" value="F:symporter activity"/>
    <property type="evidence" value="ECO:0007669"/>
    <property type="project" value="UniProtKB-UniRule"/>
</dbReference>
<dbReference type="HAMAP" id="MF_01522">
    <property type="entry name" value="Kup"/>
    <property type="match status" value="1"/>
</dbReference>
<dbReference type="InterPro" id="IPR003855">
    <property type="entry name" value="K+_transporter"/>
</dbReference>
<dbReference type="InterPro" id="IPR053952">
    <property type="entry name" value="K_trans_C"/>
</dbReference>
<dbReference type="InterPro" id="IPR053951">
    <property type="entry name" value="K_trans_N"/>
</dbReference>
<dbReference type="InterPro" id="IPR023051">
    <property type="entry name" value="Kup"/>
</dbReference>
<dbReference type="PANTHER" id="PTHR30540:SF83">
    <property type="entry name" value="K+ POTASSIUM TRANSPORTER"/>
    <property type="match status" value="1"/>
</dbReference>
<dbReference type="PANTHER" id="PTHR30540">
    <property type="entry name" value="OSMOTIC STRESS POTASSIUM TRANSPORTER"/>
    <property type="match status" value="1"/>
</dbReference>
<dbReference type="Pfam" id="PF02705">
    <property type="entry name" value="K_trans"/>
    <property type="match status" value="1"/>
</dbReference>
<dbReference type="Pfam" id="PF22776">
    <property type="entry name" value="K_trans_C"/>
    <property type="match status" value="1"/>
</dbReference>
<proteinExistence type="inferred from homology"/>
<feature type="chain" id="PRO_0000292617" description="Probable potassium transport system protein Kup 2">
    <location>
        <begin position="1"/>
        <end position="671"/>
    </location>
</feature>
<feature type="transmembrane region" description="Helical" evidence="1">
    <location>
        <begin position="18"/>
        <end position="38"/>
    </location>
</feature>
<feature type="transmembrane region" description="Helical" evidence="1">
    <location>
        <begin position="60"/>
        <end position="80"/>
    </location>
</feature>
<feature type="transmembrane region" description="Helical" evidence="1">
    <location>
        <begin position="103"/>
        <end position="123"/>
    </location>
</feature>
<feature type="transmembrane region" description="Helical" evidence="1">
    <location>
        <begin position="149"/>
        <end position="169"/>
    </location>
</feature>
<feature type="transmembrane region" description="Helical" evidence="1">
    <location>
        <begin position="173"/>
        <end position="193"/>
    </location>
</feature>
<feature type="transmembrane region" description="Helical" evidence="1">
    <location>
        <begin position="218"/>
        <end position="238"/>
    </location>
</feature>
<feature type="transmembrane region" description="Helical" evidence="1">
    <location>
        <begin position="252"/>
        <end position="272"/>
    </location>
</feature>
<feature type="transmembrane region" description="Helical" evidence="1">
    <location>
        <begin position="292"/>
        <end position="312"/>
    </location>
</feature>
<feature type="transmembrane region" description="Helical" evidence="1">
    <location>
        <begin position="343"/>
        <end position="363"/>
    </location>
</feature>
<feature type="transmembrane region" description="Helical" evidence="1">
    <location>
        <begin position="373"/>
        <end position="393"/>
    </location>
</feature>
<feature type="transmembrane region" description="Helical" evidence="1">
    <location>
        <begin position="402"/>
        <end position="422"/>
    </location>
</feature>
<feature type="transmembrane region" description="Helical" evidence="1">
    <location>
        <begin position="424"/>
        <end position="444"/>
    </location>
</feature>
<name>KUP2_LACLM</name>
<accession>A2RIU1</accession>
<comment type="function">
    <text evidence="1">Transport of potassium into the cell. Likely operates as a K(+):H(+) symporter.</text>
</comment>
<comment type="catalytic activity">
    <reaction evidence="1">
        <text>K(+)(in) + H(+)(in) = K(+)(out) + H(+)(out)</text>
        <dbReference type="Rhea" id="RHEA:28490"/>
        <dbReference type="ChEBI" id="CHEBI:15378"/>
        <dbReference type="ChEBI" id="CHEBI:29103"/>
    </reaction>
    <physiologicalReaction direction="right-to-left" evidence="1">
        <dbReference type="Rhea" id="RHEA:28492"/>
    </physiologicalReaction>
</comment>
<comment type="subcellular location">
    <subcellularLocation>
        <location evidence="1">Cell membrane</location>
        <topology evidence="1">Multi-pass membrane protein</topology>
    </subcellularLocation>
</comment>
<comment type="similarity">
    <text evidence="1">Belongs to the HAK/KUP transporter (TC 2.A.72) family.</text>
</comment>
<reference key="1">
    <citation type="journal article" date="2007" name="J. Bacteriol.">
        <title>The complete genome sequence of the lactic acid bacterial paradigm Lactococcus lactis subsp. cremoris MG1363.</title>
        <authorList>
            <person name="Wegmann U."/>
            <person name="O'Connell-Motherway M."/>
            <person name="Zomer A."/>
            <person name="Buist G."/>
            <person name="Shearman C."/>
            <person name="Canchaya C."/>
            <person name="Ventura M."/>
            <person name="Goesmann A."/>
            <person name="Gasson M.J."/>
            <person name="Kuipers O.P."/>
            <person name="van Sinderen D."/>
            <person name="Kok J."/>
        </authorList>
    </citation>
    <scope>NUCLEOTIDE SEQUENCE [LARGE SCALE GENOMIC DNA]</scope>
    <source>
        <strain>MG1363</strain>
    </source>
</reference>
<protein>
    <recommendedName>
        <fullName evidence="1">Probable potassium transport system protein Kup 2</fullName>
    </recommendedName>
</protein>
<sequence length="671" mass="75544">MGQVHLHNRSFNKATSAGFLIALGIVYGDIGTSPLYAMQAIVRGQGGLANLSESFILGAVSLVIWTLTLITTVKYVLIALKADNHHEGGIFSLFTLVRRMRKWLIVPAMIGGATLLADGALTPAVTVTSAIEGLRGVTHVYSNQTTVMVTTLIILAFLFLIQRFGASLVGRLFGPIMFIWFGFLGVSGLINSFLDLSILKAINPYYAIHLLFSPENKAGFFILGSIFLVTTGAEALYSDLGHVGRGNIYVSWPFVKICIILSYCGQGAWLLAHRGEHIEKLNPFFAVLPDNMVIYVVILSTLAAIIASQALISGSFTLVSEAIRLKLLPLFKIYYPGQTLGQLYIPAVNFALWVTTSFFVLYFKTSEHMEAAYSLAITITMLMTTTLLTYFLIQKGTPKIAIAFISIGLFCIEGSFFAASLVQFINGAYIVVLIALAIIFVMFIWNKSHKIVMKYIKSLNINEYKNQLNALRHDESYDLYQTNVVYLTSKMDHEWIDRSILYSILDKRPKRAECYWFVNVKVTDEPYTSEYKVDMMDTDFIVRVNLYLGFRMRQEVPRYLRTIVTDLMESGRLPRQHQHYSITPGRKVGDFRFVVVEEKLMNARQMPGFERFVLQTKAQIKRITASPIRWFGLQFSEVTVETVPLVLSDVRNLEIHERLEQVDETEAPATN</sequence>
<gene>
    <name evidence="1" type="primary">kup2</name>
    <name type="ordered locus">llmg_0588</name>
</gene>